<accession>P83319</accession>
<reference key="1">
    <citation type="journal article" date="2002" name="Comp. Biochem. Physiol.">
        <title>Seven novel FMRFamide-like neuropeptide sequences from the eyestalk of the giant tiger prawn Penaeus monodon.</title>
        <authorList>
            <person name="Sithigorngul P."/>
            <person name="Pupuem J."/>
            <person name="Krungkasem C."/>
            <person name="Longyant S."/>
            <person name="Chaivisuthangkura P."/>
            <person name="Sithigorngul W."/>
            <person name="Petsom A."/>
        </authorList>
    </citation>
    <scope>PROTEIN SEQUENCE</scope>
    <scope>AMIDATION AT PHE-9</scope>
    <scope>MASS SPECTROMETRY</scope>
    <source>
        <tissue>Eyestalk</tissue>
    </source>
</reference>
<proteinExistence type="evidence at protein level"/>
<protein>
    <recommendedName>
        <fullName>FMRFamide-like neuropeptide FLP4</fullName>
    </recommendedName>
    <alternativeName>
        <fullName>SQPSMRLRF-amide</fullName>
    </alternativeName>
</protein>
<evidence type="ECO:0000269" key="1">
    <source>
    </source>
</evidence>
<evidence type="ECO:0000305" key="2"/>
<name>FAR4_PENMO</name>
<comment type="subcellular location">
    <subcellularLocation>
        <location>Secreted</location>
    </subcellularLocation>
</comment>
<comment type="mass spectrometry"/>
<comment type="similarity">
    <text evidence="2">Belongs to the FARP (FMRFamide related peptide) family.</text>
</comment>
<keyword id="KW-0027">Amidation</keyword>
<keyword id="KW-0903">Direct protein sequencing</keyword>
<keyword id="KW-0527">Neuropeptide</keyword>
<keyword id="KW-0964">Secreted</keyword>
<feature type="peptide" id="PRO_0000043700" description="FMRFamide-like neuropeptide FLP4">
    <location>
        <begin position="1"/>
        <end position="9"/>
    </location>
</feature>
<feature type="modified residue" description="Phenylalanine amide" evidence="1">
    <location>
        <position position="9"/>
    </location>
</feature>
<dbReference type="GO" id="GO:0005576">
    <property type="term" value="C:extracellular region"/>
    <property type="evidence" value="ECO:0007669"/>
    <property type="project" value="UniProtKB-SubCell"/>
</dbReference>
<dbReference type="GO" id="GO:0007218">
    <property type="term" value="P:neuropeptide signaling pathway"/>
    <property type="evidence" value="ECO:0000304"/>
    <property type="project" value="UniProtKB"/>
</dbReference>
<organism evidence="2">
    <name type="scientific">Penaeus monodon</name>
    <name type="common">Giant tiger prawn</name>
    <dbReference type="NCBI Taxonomy" id="6687"/>
    <lineage>
        <taxon>Eukaryota</taxon>
        <taxon>Metazoa</taxon>
        <taxon>Ecdysozoa</taxon>
        <taxon>Arthropoda</taxon>
        <taxon>Crustacea</taxon>
        <taxon>Multicrustacea</taxon>
        <taxon>Malacostraca</taxon>
        <taxon>Eumalacostraca</taxon>
        <taxon>Eucarida</taxon>
        <taxon>Decapoda</taxon>
        <taxon>Dendrobranchiata</taxon>
        <taxon>Penaeoidea</taxon>
        <taxon>Penaeidae</taxon>
        <taxon>Penaeus</taxon>
    </lineage>
</organism>
<sequence>SQPSMRLRF</sequence>